<dbReference type="EMBL" id="CP001074">
    <property type="protein sequence ID" value="ACE89922.1"/>
    <property type="molecule type" value="Genomic_DNA"/>
</dbReference>
<dbReference type="SMR" id="B3PRD9"/>
<dbReference type="KEGG" id="rec:RHECIAT_CH0000937"/>
<dbReference type="eggNOG" id="COG0323">
    <property type="taxonomic scope" value="Bacteria"/>
</dbReference>
<dbReference type="HOGENOM" id="CLU_004131_4_2_5"/>
<dbReference type="Proteomes" id="UP000008817">
    <property type="component" value="Chromosome"/>
</dbReference>
<dbReference type="GO" id="GO:0032300">
    <property type="term" value="C:mismatch repair complex"/>
    <property type="evidence" value="ECO:0007669"/>
    <property type="project" value="InterPro"/>
</dbReference>
<dbReference type="GO" id="GO:0005524">
    <property type="term" value="F:ATP binding"/>
    <property type="evidence" value="ECO:0007669"/>
    <property type="project" value="InterPro"/>
</dbReference>
<dbReference type="GO" id="GO:0016887">
    <property type="term" value="F:ATP hydrolysis activity"/>
    <property type="evidence" value="ECO:0007669"/>
    <property type="project" value="InterPro"/>
</dbReference>
<dbReference type="GO" id="GO:0140664">
    <property type="term" value="F:ATP-dependent DNA damage sensor activity"/>
    <property type="evidence" value="ECO:0007669"/>
    <property type="project" value="InterPro"/>
</dbReference>
<dbReference type="GO" id="GO:0030983">
    <property type="term" value="F:mismatched DNA binding"/>
    <property type="evidence" value="ECO:0007669"/>
    <property type="project" value="InterPro"/>
</dbReference>
<dbReference type="GO" id="GO:0006298">
    <property type="term" value="P:mismatch repair"/>
    <property type="evidence" value="ECO:0007669"/>
    <property type="project" value="UniProtKB-UniRule"/>
</dbReference>
<dbReference type="CDD" id="cd16926">
    <property type="entry name" value="HATPase_MutL-MLH-PMS-like"/>
    <property type="match status" value="1"/>
</dbReference>
<dbReference type="CDD" id="cd00782">
    <property type="entry name" value="MutL_Trans"/>
    <property type="match status" value="1"/>
</dbReference>
<dbReference type="FunFam" id="3.30.565.10:FF:000003">
    <property type="entry name" value="DNA mismatch repair endonuclease MutL"/>
    <property type="match status" value="1"/>
</dbReference>
<dbReference type="Gene3D" id="3.30.230.10">
    <property type="match status" value="1"/>
</dbReference>
<dbReference type="Gene3D" id="3.30.565.10">
    <property type="entry name" value="Histidine kinase-like ATPase, C-terminal domain"/>
    <property type="match status" value="1"/>
</dbReference>
<dbReference type="Gene3D" id="3.30.1540.20">
    <property type="entry name" value="MutL, C-terminal domain, dimerisation subdomain"/>
    <property type="match status" value="1"/>
</dbReference>
<dbReference type="Gene3D" id="3.30.1370.100">
    <property type="entry name" value="MutL, C-terminal domain, regulatory subdomain"/>
    <property type="match status" value="1"/>
</dbReference>
<dbReference type="HAMAP" id="MF_00149">
    <property type="entry name" value="DNA_mis_repair"/>
    <property type="match status" value="1"/>
</dbReference>
<dbReference type="InterPro" id="IPR014762">
    <property type="entry name" value="DNA_mismatch_repair_CS"/>
</dbReference>
<dbReference type="InterPro" id="IPR020667">
    <property type="entry name" value="DNA_mismatch_repair_MutL"/>
</dbReference>
<dbReference type="InterPro" id="IPR013507">
    <property type="entry name" value="DNA_mismatch_S5_2-like"/>
</dbReference>
<dbReference type="InterPro" id="IPR036890">
    <property type="entry name" value="HATPase_C_sf"/>
</dbReference>
<dbReference type="InterPro" id="IPR002099">
    <property type="entry name" value="MutL/Mlh/PMS"/>
</dbReference>
<dbReference type="InterPro" id="IPR038973">
    <property type="entry name" value="MutL/Mlh/Pms-like"/>
</dbReference>
<dbReference type="InterPro" id="IPR014790">
    <property type="entry name" value="MutL_C"/>
</dbReference>
<dbReference type="InterPro" id="IPR042120">
    <property type="entry name" value="MutL_C_dimsub"/>
</dbReference>
<dbReference type="InterPro" id="IPR042121">
    <property type="entry name" value="MutL_C_regsub"/>
</dbReference>
<dbReference type="InterPro" id="IPR037198">
    <property type="entry name" value="MutL_C_sf"/>
</dbReference>
<dbReference type="InterPro" id="IPR020568">
    <property type="entry name" value="Ribosomal_Su5_D2-typ_SF"/>
</dbReference>
<dbReference type="InterPro" id="IPR014721">
    <property type="entry name" value="Ribsml_uS5_D2-typ_fold_subgr"/>
</dbReference>
<dbReference type="NCBIfam" id="TIGR00585">
    <property type="entry name" value="mutl"/>
    <property type="match status" value="1"/>
</dbReference>
<dbReference type="NCBIfam" id="NF000953">
    <property type="entry name" value="PRK00095.2-4"/>
    <property type="match status" value="1"/>
</dbReference>
<dbReference type="PANTHER" id="PTHR10073">
    <property type="entry name" value="DNA MISMATCH REPAIR PROTEIN MLH, PMS, MUTL"/>
    <property type="match status" value="1"/>
</dbReference>
<dbReference type="PANTHER" id="PTHR10073:SF12">
    <property type="entry name" value="DNA MISMATCH REPAIR PROTEIN MLH1"/>
    <property type="match status" value="1"/>
</dbReference>
<dbReference type="Pfam" id="PF01119">
    <property type="entry name" value="DNA_mis_repair"/>
    <property type="match status" value="1"/>
</dbReference>
<dbReference type="Pfam" id="PF13589">
    <property type="entry name" value="HATPase_c_3"/>
    <property type="match status" value="1"/>
</dbReference>
<dbReference type="Pfam" id="PF08676">
    <property type="entry name" value="MutL_C"/>
    <property type="match status" value="1"/>
</dbReference>
<dbReference type="SMART" id="SM01340">
    <property type="entry name" value="DNA_mis_repair"/>
    <property type="match status" value="1"/>
</dbReference>
<dbReference type="SMART" id="SM00853">
    <property type="entry name" value="MutL_C"/>
    <property type="match status" value="1"/>
</dbReference>
<dbReference type="SUPFAM" id="SSF55874">
    <property type="entry name" value="ATPase domain of HSP90 chaperone/DNA topoisomerase II/histidine kinase"/>
    <property type="match status" value="1"/>
</dbReference>
<dbReference type="SUPFAM" id="SSF118116">
    <property type="entry name" value="DNA mismatch repair protein MutL"/>
    <property type="match status" value="1"/>
</dbReference>
<dbReference type="SUPFAM" id="SSF54211">
    <property type="entry name" value="Ribosomal protein S5 domain 2-like"/>
    <property type="match status" value="1"/>
</dbReference>
<dbReference type="PROSITE" id="PS00058">
    <property type="entry name" value="DNA_MISMATCH_REPAIR_1"/>
    <property type="match status" value="1"/>
</dbReference>
<keyword id="KW-0227">DNA damage</keyword>
<keyword id="KW-0234">DNA repair</keyword>
<evidence type="ECO:0000255" key="1">
    <source>
        <dbReference type="HAMAP-Rule" id="MF_00149"/>
    </source>
</evidence>
<evidence type="ECO:0000256" key="2">
    <source>
        <dbReference type="SAM" id="MobiDB-lite"/>
    </source>
</evidence>
<feature type="chain" id="PRO_1000096676" description="DNA mismatch repair protein MutL">
    <location>
        <begin position="1"/>
        <end position="606"/>
    </location>
</feature>
<feature type="region of interest" description="Disordered" evidence="2">
    <location>
        <begin position="348"/>
        <end position="378"/>
    </location>
</feature>
<sequence length="606" mass="65169">MAIRQLSETLINQIAAGEVIERPASAAKELIENALDAGATRIEIATAGGGKALLRVSDNGSGMEATDLELAVRRHCTSKISETLEDIRTLGFRGEALPSIGSVARLNIASRRRDSAGGHEIAVAGGKIVHIRPAAANPGTIVEVRDLFFATPARLKFLKSEKAEAGAITEIVKRMAIAFPAVRFVLSGSDRTTLEFPATGDDHLARMAQVLGKEFRDNAILLDAVREDISLTGFAGVPTFNRGNSAHQYAFVNGRPVQDKLILSAIRGAYAETIPSGRYPVAVLSITLDPALVDVNVHPAKSDVRFRDPGLVRGLIVGAIREALARDGSRAATTGASDMLRAFRPGFQPHAQRPQAPWSAETSPFRPYPPAAGFSERPQASFDRLSMPTARAELQPSPQPGAPEPAASAETTGRYPLGAARAQIHANYIVAQTEDGLVIVDQHAAHERLVFEAMRKALHSKRLASQVLLIPEIIDLPEEDCDRLMQHAAELSELGLAIERFGPGAIAVRETPAMLGEVDAHGLIRQLADEIAEWDTASGLSAKLEYVAATMACHGSVRSGRRLRPEEMNALLREMEVTPGSGQCNHGRPTYIELKLSDIERLFGRS</sequence>
<comment type="function">
    <text evidence="1">This protein is involved in the repair of mismatches in DNA. It is required for dam-dependent methyl-directed DNA mismatch repair. May act as a 'molecular matchmaker', a protein that promotes the formation of a stable complex between two or more DNA-binding proteins in an ATP-dependent manner without itself being part of a final effector complex.</text>
</comment>
<comment type="similarity">
    <text evidence="1">Belongs to the DNA mismatch repair MutL/HexB family.</text>
</comment>
<organism>
    <name type="scientific">Rhizobium etli (strain CIAT 652)</name>
    <dbReference type="NCBI Taxonomy" id="491916"/>
    <lineage>
        <taxon>Bacteria</taxon>
        <taxon>Pseudomonadati</taxon>
        <taxon>Pseudomonadota</taxon>
        <taxon>Alphaproteobacteria</taxon>
        <taxon>Hyphomicrobiales</taxon>
        <taxon>Rhizobiaceae</taxon>
        <taxon>Rhizobium/Agrobacterium group</taxon>
        <taxon>Rhizobium</taxon>
    </lineage>
</organism>
<gene>
    <name evidence="1" type="primary">mutL</name>
    <name type="ordered locus">RHECIAT_CH0000937</name>
</gene>
<proteinExistence type="inferred from homology"/>
<accession>B3PRD9</accession>
<name>MUTL_RHIE6</name>
<protein>
    <recommendedName>
        <fullName evidence="1">DNA mismatch repair protein MutL</fullName>
    </recommendedName>
</protein>
<reference key="1">
    <citation type="journal article" date="2010" name="Appl. Environ. Microbiol.">
        <title>Conserved symbiotic plasmid DNA sequences in the multireplicon pangenomic structure of Rhizobium etli.</title>
        <authorList>
            <person name="Gonzalez V."/>
            <person name="Acosta J.L."/>
            <person name="Santamaria R.I."/>
            <person name="Bustos P."/>
            <person name="Fernandez J.L."/>
            <person name="Hernandez Gonzalez I.L."/>
            <person name="Diaz R."/>
            <person name="Flores M."/>
            <person name="Palacios R."/>
            <person name="Mora J."/>
            <person name="Davila G."/>
        </authorList>
    </citation>
    <scope>NUCLEOTIDE SEQUENCE [LARGE SCALE GENOMIC DNA]</scope>
    <source>
        <strain>CIAT 652</strain>
    </source>
</reference>